<evidence type="ECO:0000305" key="1"/>
<reference key="1">
    <citation type="journal article" date="1985" name="Yeast">
        <title>The PET18 locus of Saccharomyces cerevisiae: a complex locus containing multiple genes.</title>
        <authorList>
            <person name="Toh-e A."/>
            <person name="Sahashi Y."/>
        </authorList>
    </citation>
    <scope>NUCLEOTIDE SEQUENCE [GENOMIC DNA]</scope>
</reference>
<reference key="2">
    <citation type="journal article" date="1992" name="Nature">
        <title>The complete DNA sequence of yeast chromosome III.</title>
        <authorList>
            <person name="Oliver S.G."/>
            <person name="van der Aart Q.J.M."/>
            <person name="Agostoni-Carbone M.L."/>
            <person name="Aigle M."/>
            <person name="Alberghina L."/>
            <person name="Alexandraki D."/>
            <person name="Antoine G."/>
            <person name="Anwar R."/>
            <person name="Ballesta J.P.G."/>
            <person name="Benit P."/>
            <person name="Berben G."/>
            <person name="Bergantino E."/>
            <person name="Biteau N."/>
            <person name="Bolle P.-A."/>
            <person name="Bolotin-Fukuhara M."/>
            <person name="Brown A."/>
            <person name="Brown A.J.P."/>
            <person name="Buhler J.-M."/>
            <person name="Carcano C."/>
            <person name="Carignani G."/>
            <person name="Cederberg H."/>
            <person name="Chanet R."/>
            <person name="Contreras R."/>
            <person name="Crouzet M."/>
            <person name="Daignan-Fornier B."/>
            <person name="Defoor E."/>
            <person name="Delgado M.D."/>
            <person name="Demolder J."/>
            <person name="Doira C."/>
            <person name="Dubois E."/>
            <person name="Dujon B."/>
            <person name="Duesterhoeft A."/>
            <person name="Erdmann D."/>
            <person name="Esteban M."/>
            <person name="Fabre F."/>
            <person name="Fairhead C."/>
            <person name="Faye G."/>
            <person name="Feldmann H."/>
            <person name="Fiers W."/>
            <person name="Francingues-Gaillard M.-C."/>
            <person name="Franco L."/>
            <person name="Frontali L."/>
            <person name="Fukuhara H."/>
            <person name="Fuller L.J."/>
            <person name="Galland P."/>
            <person name="Gent M.E."/>
            <person name="Gigot D."/>
            <person name="Gilliquet V."/>
            <person name="Glansdorff N."/>
            <person name="Goffeau A."/>
            <person name="Grenson M."/>
            <person name="Grisanti P."/>
            <person name="Grivell L.A."/>
            <person name="de Haan M."/>
            <person name="Haasemann M."/>
            <person name="Hatat D."/>
            <person name="Hoenicka J."/>
            <person name="Hegemann J.H."/>
            <person name="Herbert C.J."/>
            <person name="Hilger F."/>
            <person name="Hohmann S."/>
            <person name="Hollenberg C.P."/>
            <person name="Huse K."/>
            <person name="Iborra F."/>
            <person name="Indge K.J."/>
            <person name="Isono K."/>
            <person name="Jacq C."/>
            <person name="Jacquet M."/>
            <person name="James C.M."/>
            <person name="Jauniaux J.-C."/>
            <person name="Jia Y."/>
            <person name="Jimenez A."/>
            <person name="Kelly A."/>
            <person name="Kleinhans U."/>
            <person name="Kreisl P."/>
            <person name="Lanfranchi G."/>
            <person name="Lewis C."/>
            <person name="van der Linden C.G."/>
            <person name="Lucchini G."/>
            <person name="Lutzenkirchen K."/>
            <person name="Maat M.J."/>
            <person name="Mallet L."/>
            <person name="Mannhaupt G."/>
            <person name="Martegani E."/>
            <person name="Mathieu A."/>
            <person name="Maurer C.T.C."/>
            <person name="McConnell D."/>
            <person name="McKee R.A."/>
            <person name="Messenguy F."/>
            <person name="Mewes H.-W."/>
            <person name="Molemans F."/>
            <person name="Montague M.A."/>
            <person name="Muzi Falconi M."/>
            <person name="Navas L."/>
            <person name="Newlon C.S."/>
            <person name="Noone D."/>
            <person name="Pallier C."/>
            <person name="Panzeri L."/>
            <person name="Pearson B.M."/>
            <person name="Perea J."/>
            <person name="Philippsen P."/>
            <person name="Pierard A."/>
            <person name="Planta R.J."/>
            <person name="Plevani P."/>
            <person name="Poetsch B."/>
            <person name="Pohl F.M."/>
            <person name="Purnelle B."/>
            <person name="Ramezani Rad M."/>
            <person name="Rasmussen S.W."/>
            <person name="Raynal A."/>
            <person name="Remacha M.A."/>
            <person name="Richterich P."/>
            <person name="Roberts A.B."/>
            <person name="Rodriguez F."/>
            <person name="Sanz E."/>
            <person name="Schaaff-Gerstenschlaeger I."/>
            <person name="Scherens B."/>
            <person name="Schweitzer B."/>
            <person name="Shu Y."/>
            <person name="Skala J."/>
            <person name="Slonimski P.P."/>
            <person name="Sor F."/>
            <person name="Soustelle C."/>
            <person name="Spiegelberg R."/>
            <person name="Stateva L.I."/>
            <person name="Steensma H.Y."/>
            <person name="Steiner S."/>
            <person name="Thierry A."/>
            <person name="Thireos G."/>
            <person name="Tzermia M."/>
            <person name="Urrestarazu L.A."/>
            <person name="Valle G."/>
            <person name="Vetter I."/>
            <person name="van Vliet-Reedijk J.C."/>
            <person name="Voet M."/>
            <person name="Volckaert G."/>
            <person name="Vreken P."/>
            <person name="Wang H."/>
            <person name="Warmington J.R."/>
            <person name="von Wettstein D."/>
            <person name="Wicksteed B.L."/>
            <person name="Wilson C."/>
            <person name="Wurst H."/>
            <person name="Xu G."/>
            <person name="Yoshikawa A."/>
            <person name="Zimmermann F.K."/>
            <person name="Sgouros J.G."/>
        </authorList>
    </citation>
    <scope>NUCLEOTIDE SEQUENCE [LARGE SCALE GENOMIC DNA]</scope>
    <source>
        <strain>ATCC 204508 / S288c</strain>
    </source>
</reference>
<reference key="3">
    <citation type="journal article" date="2014" name="G3 (Bethesda)">
        <title>The reference genome sequence of Saccharomyces cerevisiae: Then and now.</title>
        <authorList>
            <person name="Engel S.R."/>
            <person name="Dietrich F.S."/>
            <person name="Fisk D.G."/>
            <person name="Binkley G."/>
            <person name="Balakrishnan R."/>
            <person name="Costanzo M.C."/>
            <person name="Dwight S.S."/>
            <person name="Hitz B.C."/>
            <person name="Karra K."/>
            <person name="Nash R.S."/>
            <person name="Weng S."/>
            <person name="Wong E.D."/>
            <person name="Lloyd P."/>
            <person name="Skrzypek M.S."/>
            <person name="Miyasato S.R."/>
            <person name="Simison M."/>
            <person name="Cherry J.M."/>
        </authorList>
    </citation>
    <scope>GENOME REANNOTATION</scope>
    <source>
        <strain>ATCC 204508 / S288c</strain>
    </source>
</reference>
<reference key="4">
    <citation type="journal article" date="2007" name="Genome Res.">
        <title>Approaching a complete repository of sequence-verified protein-encoding clones for Saccharomyces cerevisiae.</title>
        <authorList>
            <person name="Hu Y."/>
            <person name="Rolfs A."/>
            <person name="Bhullar B."/>
            <person name="Murthy T.V.S."/>
            <person name="Zhu C."/>
            <person name="Berger M.F."/>
            <person name="Camargo A.A."/>
            <person name="Kelley F."/>
            <person name="McCarron S."/>
            <person name="Jepson D."/>
            <person name="Richardson A."/>
            <person name="Raphael J."/>
            <person name="Moreira D."/>
            <person name="Taycher E."/>
            <person name="Zuo D."/>
            <person name="Mohr S."/>
            <person name="Kane M.F."/>
            <person name="Williamson J."/>
            <person name="Simpson A.J.G."/>
            <person name="Bulyk M.L."/>
            <person name="Harlow E."/>
            <person name="Marsischky G."/>
            <person name="Kolodner R.D."/>
            <person name="LaBaer J."/>
        </authorList>
    </citation>
    <scope>NUCLEOTIDE SEQUENCE [GENOMIC DNA]</scope>
    <source>
        <strain>ATCC 204508 / S288c</strain>
    </source>
</reference>
<name>MAK32_YEAST</name>
<protein>
    <recommendedName>
        <fullName>Protein MAK32</fullName>
    </recommendedName>
    <alternativeName>
        <fullName>Maintenance of killer protein 32</fullName>
    </alternativeName>
</protein>
<sequence length="363" mass="40783">MMNEEDSTETKSLVITNGMFIIDDIERSKYNIHYKNVPGGGGTFAILGACIISSGNVTSKGLKWIVDRGSDFPKEVIREIDSWGTDVRFRDDFSRLTTKGLNYYEGSDDLRKFKFLTPKKQINVDDWISTFGQKIIDEMHAFHLLCSGSRCLDIINDLLRVKSSKGTKPIVIWEPFPDLCDFDHQNDIKSVMQRNDVTVILSPNAEESSRLFGLSSKEPTSLEECLALAHRFDDFMDENNMCILRCGALGSISVSEKFKNGRTYDHFPAYHFKTQSKVLDPTGGGNSFLGGFAVSYALTKSLDIASICGNIAAGAIIEQFGIPRYDPIAKTWNGITFLDRLKFYLSQSGLQYNINDLYKSLTR</sequence>
<proteinExistence type="predicted"/>
<accession>P23060</accession>
<accession>D6VR27</accession>
<gene>
    <name type="primary">MAK32</name>
    <name type="ordered locus">YCR019W</name>
    <name type="ORF">YCR19W</name>
</gene>
<organism>
    <name type="scientific">Saccharomyces cerevisiae (strain ATCC 204508 / S288c)</name>
    <name type="common">Baker's yeast</name>
    <dbReference type="NCBI Taxonomy" id="559292"/>
    <lineage>
        <taxon>Eukaryota</taxon>
        <taxon>Fungi</taxon>
        <taxon>Dikarya</taxon>
        <taxon>Ascomycota</taxon>
        <taxon>Saccharomycotina</taxon>
        <taxon>Saccharomycetes</taxon>
        <taxon>Saccharomycetales</taxon>
        <taxon>Saccharomycetaceae</taxon>
        <taxon>Saccharomyces</taxon>
    </lineage>
</organism>
<dbReference type="EMBL" id="X59720">
    <property type="protein sequence ID" value="CAA42310.1"/>
    <property type="molecule type" value="Genomic_DNA"/>
</dbReference>
<dbReference type="EMBL" id="AY693011">
    <property type="protein sequence ID" value="AAT93030.1"/>
    <property type="molecule type" value="Genomic_DNA"/>
</dbReference>
<dbReference type="EMBL" id="BK006937">
    <property type="protein sequence ID" value="DAA07496.1"/>
    <property type="molecule type" value="Genomic_DNA"/>
</dbReference>
<dbReference type="PIR" id="S19429">
    <property type="entry name" value="BVBYK2"/>
</dbReference>
<dbReference type="RefSeq" id="NP_009946.1">
    <property type="nucleotide sequence ID" value="NM_001178732.1"/>
</dbReference>
<dbReference type="SMR" id="P23060"/>
<dbReference type="BioGRID" id="31000">
    <property type="interactions" value="35"/>
</dbReference>
<dbReference type="FunCoup" id="P23060">
    <property type="interactions" value="53"/>
</dbReference>
<dbReference type="IntAct" id="P23060">
    <property type="interactions" value="1"/>
</dbReference>
<dbReference type="STRING" id="4932.YCR019W"/>
<dbReference type="PaxDb" id="4932-YCR019W"/>
<dbReference type="PeptideAtlas" id="P23060"/>
<dbReference type="EnsemblFungi" id="YCR019W_mRNA">
    <property type="protein sequence ID" value="YCR019W"/>
    <property type="gene ID" value="YCR019W"/>
</dbReference>
<dbReference type="GeneID" id="850381"/>
<dbReference type="KEGG" id="sce:YCR019W"/>
<dbReference type="AGR" id="SGD:S000000612"/>
<dbReference type="SGD" id="S000000612">
    <property type="gene designation" value="MAK32"/>
</dbReference>
<dbReference type="VEuPathDB" id="FungiDB:YCR019W"/>
<dbReference type="eggNOG" id="ENOG502RXN8">
    <property type="taxonomic scope" value="Eukaryota"/>
</dbReference>
<dbReference type="HOGENOM" id="CLU_032834_0_0_1"/>
<dbReference type="InParanoid" id="P23060"/>
<dbReference type="OMA" id="VIKSWNT"/>
<dbReference type="OrthoDB" id="497927at2759"/>
<dbReference type="BioCyc" id="YEAST:G3O-29334-MONOMER"/>
<dbReference type="BioGRID-ORCS" id="850381">
    <property type="hits" value="0 hits in 10 CRISPR screens"/>
</dbReference>
<dbReference type="PRO" id="PR:P23060"/>
<dbReference type="Proteomes" id="UP000002311">
    <property type="component" value="Chromosome III"/>
</dbReference>
<dbReference type="RNAct" id="P23060">
    <property type="molecule type" value="protein"/>
</dbReference>
<dbReference type="CDD" id="cd01943">
    <property type="entry name" value="MAK32"/>
    <property type="match status" value="1"/>
</dbReference>
<dbReference type="FunFam" id="3.40.1190.20:FF:000075">
    <property type="entry name" value="Mak32p"/>
    <property type="match status" value="1"/>
</dbReference>
<dbReference type="Gene3D" id="3.40.1190.20">
    <property type="match status" value="1"/>
</dbReference>
<dbReference type="InterPro" id="IPR034094">
    <property type="entry name" value="Mak32"/>
</dbReference>
<dbReference type="InterPro" id="IPR011611">
    <property type="entry name" value="PfkB_dom"/>
</dbReference>
<dbReference type="InterPro" id="IPR029056">
    <property type="entry name" value="Ribokinase-like"/>
</dbReference>
<dbReference type="PANTHER" id="PTHR47098">
    <property type="entry name" value="PROTEIN MAK32"/>
    <property type="match status" value="1"/>
</dbReference>
<dbReference type="PANTHER" id="PTHR47098:SF2">
    <property type="entry name" value="PROTEIN MAK32"/>
    <property type="match status" value="1"/>
</dbReference>
<dbReference type="Pfam" id="PF00294">
    <property type="entry name" value="PfkB"/>
    <property type="match status" value="1"/>
</dbReference>
<dbReference type="SUPFAM" id="SSF53613">
    <property type="entry name" value="Ribokinase-like"/>
    <property type="match status" value="1"/>
</dbReference>
<keyword id="KW-1185">Reference proteome</keyword>
<comment type="function">
    <text>Necessary for the structural stability of L-A double-stranded RNA-containing particles. Necessary for growth at 37 degrees Celsius as well as for maintenance of the killer plasmid.</text>
</comment>
<comment type="similarity">
    <text evidence="1">To S.pombe SpAC4G8.14c.</text>
</comment>
<feature type="chain" id="PRO_0000084555" description="Protein MAK32">
    <location>
        <begin position="1"/>
        <end position="363"/>
    </location>
</feature>
<feature type="sequence conflict" description="In Ref. 1." evidence="1" ref="1">
    <original>I</original>
    <variation>II</variation>
    <location>
        <position position="15"/>
    </location>
</feature>
<feature type="sequence conflict" description="In Ref. 1." evidence="1" ref="1">
    <location>
        <position position="82"/>
    </location>
</feature>